<evidence type="ECO:0000255" key="1">
    <source>
        <dbReference type="HAMAP-Rule" id="MF_01864"/>
    </source>
</evidence>
<evidence type="ECO:0000255" key="2">
    <source>
        <dbReference type="PROSITE-ProRule" id="PRU01266"/>
    </source>
</evidence>
<dbReference type="EC" id="2.8.4.3" evidence="1"/>
<dbReference type="EMBL" id="CP000463">
    <property type="protein sequence ID" value="ABJ04166.1"/>
    <property type="molecule type" value="Genomic_DNA"/>
</dbReference>
<dbReference type="SMR" id="Q07V68"/>
<dbReference type="STRING" id="316055.RPE_0206"/>
<dbReference type="KEGG" id="rpe:RPE_0206"/>
<dbReference type="eggNOG" id="COG0621">
    <property type="taxonomic scope" value="Bacteria"/>
</dbReference>
<dbReference type="HOGENOM" id="CLU_018697_2_0_5"/>
<dbReference type="OrthoDB" id="9805215at2"/>
<dbReference type="GO" id="GO:0005829">
    <property type="term" value="C:cytosol"/>
    <property type="evidence" value="ECO:0007669"/>
    <property type="project" value="TreeGrafter"/>
</dbReference>
<dbReference type="GO" id="GO:0051539">
    <property type="term" value="F:4 iron, 4 sulfur cluster binding"/>
    <property type="evidence" value="ECO:0007669"/>
    <property type="project" value="UniProtKB-UniRule"/>
</dbReference>
<dbReference type="GO" id="GO:0046872">
    <property type="term" value="F:metal ion binding"/>
    <property type="evidence" value="ECO:0007669"/>
    <property type="project" value="UniProtKB-KW"/>
</dbReference>
<dbReference type="GO" id="GO:0035597">
    <property type="term" value="F:N6-isopentenyladenosine methylthiotransferase activity"/>
    <property type="evidence" value="ECO:0007669"/>
    <property type="project" value="TreeGrafter"/>
</dbReference>
<dbReference type="CDD" id="cd01335">
    <property type="entry name" value="Radical_SAM"/>
    <property type="match status" value="1"/>
</dbReference>
<dbReference type="FunFam" id="3.40.50.12160:FF:000003">
    <property type="entry name" value="CDK5 regulatory subunit-associated protein 1"/>
    <property type="match status" value="1"/>
</dbReference>
<dbReference type="FunFam" id="3.80.30.20:FF:000001">
    <property type="entry name" value="tRNA-2-methylthio-N(6)-dimethylallyladenosine synthase 2"/>
    <property type="match status" value="1"/>
</dbReference>
<dbReference type="Gene3D" id="3.40.50.12160">
    <property type="entry name" value="Methylthiotransferase, N-terminal domain"/>
    <property type="match status" value="1"/>
</dbReference>
<dbReference type="Gene3D" id="3.80.30.20">
    <property type="entry name" value="tm_1862 like domain"/>
    <property type="match status" value="1"/>
</dbReference>
<dbReference type="HAMAP" id="MF_01864">
    <property type="entry name" value="tRNA_metthiotr_MiaB"/>
    <property type="match status" value="1"/>
</dbReference>
<dbReference type="InterPro" id="IPR006638">
    <property type="entry name" value="Elp3/MiaA/NifB-like_rSAM"/>
</dbReference>
<dbReference type="InterPro" id="IPR005839">
    <property type="entry name" value="Methylthiotransferase"/>
</dbReference>
<dbReference type="InterPro" id="IPR020612">
    <property type="entry name" value="Methylthiotransferase_CS"/>
</dbReference>
<dbReference type="InterPro" id="IPR013848">
    <property type="entry name" value="Methylthiotransferase_N"/>
</dbReference>
<dbReference type="InterPro" id="IPR038135">
    <property type="entry name" value="Methylthiotransferase_N_sf"/>
</dbReference>
<dbReference type="InterPro" id="IPR006463">
    <property type="entry name" value="MiaB_methiolase"/>
</dbReference>
<dbReference type="InterPro" id="IPR007197">
    <property type="entry name" value="rSAM"/>
</dbReference>
<dbReference type="InterPro" id="IPR023404">
    <property type="entry name" value="rSAM_horseshoe"/>
</dbReference>
<dbReference type="InterPro" id="IPR002792">
    <property type="entry name" value="TRAM_dom"/>
</dbReference>
<dbReference type="NCBIfam" id="TIGR01574">
    <property type="entry name" value="miaB-methiolase"/>
    <property type="match status" value="1"/>
</dbReference>
<dbReference type="NCBIfam" id="TIGR00089">
    <property type="entry name" value="MiaB/RimO family radical SAM methylthiotransferase"/>
    <property type="match status" value="1"/>
</dbReference>
<dbReference type="PANTHER" id="PTHR43020">
    <property type="entry name" value="CDK5 REGULATORY SUBUNIT-ASSOCIATED PROTEIN 1"/>
    <property type="match status" value="1"/>
</dbReference>
<dbReference type="PANTHER" id="PTHR43020:SF2">
    <property type="entry name" value="MITOCHONDRIAL TRNA METHYLTHIOTRANSFERASE CDK5RAP1"/>
    <property type="match status" value="1"/>
</dbReference>
<dbReference type="Pfam" id="PF04055">
    <property type="entry name" value="Radical_SAM"/>
    <property type="match status" value="1"/>
</dbReference>
<dbReference type="Pfam" id="PF01938">
    <property type="entry name" value="TRAM"/>
    <property type="match status" value="1"/>
</dbReference>
<dbReference type="Pfam" id="PF00919">
    <property type="entry name" value="UPF0004"/>
    <property type="match status" value="1"/>
</dbReference>
<dbReference type="SFLD" id="SFLDF00273">
    <property type="entry name" value="(dimethylallyl)adenosine_tRNA"/>
    <property type="match status" value="1"/>
</dbReference>
<dbReference type="SFLD" id="SFLDG01082">
    <property type="entry name" value="B12-binding_domain_containing"/>
    <property type="match status" value="1"/>
</dbReference>
<dbReference type="SFLD" id="SFLDS00029">
    <property type="entry name" value="Radical_SAM"/>
    <property type="match status" value="1"/>
</dbReference>
<dbReference type="SMART" id="SM00729">
    <property type="entry name" value="Elp3"/>
    <property type="match status" value="1"/>
</dbReference>
<dbReference type="SUPFAM" id="SSF102114">
    <property type="entry name" value="Radical SAM enzymes"/>
    <property type="match status" value="1"/>
</dbReference>
<dbReference type="PROSITE" id="PS51449">
    <property type="entry name" value="MTTASE_N"/>
    <property type="match status" value="1"/>
</dbReference>
<dbReference type="PROSITE" id="PS01278">
    <property type="entry name" value="MTTASE_RADICAL"/>
    <property type="match status" value="1"/>
</dbReference>
<dbReference type="PROSITE" id="PS51918">
    <property type="entry name" value="RADICAL_SAM"/>
    <property type="match status" value="1"/>
</dbReference>
<dbReference type="PROSITE" id="PS50926">
    <property type="entry name" value="TRAM"/>
    <property type="match status" value="1"/>
</dbReference>
<gene>
    <name evidence="1" type="primary">miaB</name>
    <name type="ordered locus">RPE_0206</name>
</gene>
<proteinExistence type="inferred from homology"/>
<feature type="chain" id="PRO_0000374494" description="tRNA-2-methylthio-N(6)-dimethylallyladenosine synthase">
    <location>
        <begin position="1"/>
        <end position="465"/>
    </location>
</feature>
<feature type="domain" description="MTTase N-terminal" evidence="1">
    <location>
        <begin position="5"/>
        <end position="125"/>
    </location>
</feature>
<feature type="domain" description="Radical SAM core" evidence="2">
    <location>
        <begin position="152"/>
        <end position="382"/>
    </location>
</feature>
<feature type="domain" description="TRAM" evidence="1">
    <location>
        <begin position="387"/>
        <end position="449"/>
    </location>
</feature>
<feature type="binding site" evidence="1">
    <location>
        <position position="14"/>
    </location>
    <ligand>
        <name>[4Fe-4S] cluster</name>
        <dbReference type="ChEBI" id="CHEBI:49883"/>
        <label>1</label>
    </ligand>
</feature>
<feature type="binding site" evidence="1">
    <location>
        <position position="50"/>
    </location>
    <ligand>
        <name>[4Fe-4S] cluster</name>
        <dbReference type="ChEBI" id="CHEBI:49883"/>
        <label>1</label>
    </ligand>
</feature>
<feature type="binding site" evidence="1">
    <location>
        <position position="88"/>
    </location>
    <ligand>
        <name>[4Fe-4S] cluster</name>
        <dbReference type="ChEBI" id="CHEBI:49883"/>
        <label>1</label>
    </ligand>
</feature>
<feature type="binding site" evidence="1">
    <location>
        <position position="166"/>
    </location>
    <ligand>
        <name>[4Fe-4S] cluster</name>
        <dbReference type="ChEBI" id="CHEBI:49883"/>
        <label>2</label>
        <note>4Fe-4S-S-AdoMet</note>
    </ligand>
</feature>
<feature type="binding site" evidence="1">
    <location>
        <position position="170"/>
    </location>
    <ligand>
        <name>[4Fe-4S] cluster</name>
        <dbReference type="ChEBI" id="CHEBI:49883"/>
        <label>2</label>
        <note>4Fe-4S-S-AdoMet</note>
    </ligand>
</feature>
<feature type="binding site" evidence="1">
    <location>
        <position position="173"/>
    </location>
    <ligand>
        <name>[4Fe-4S] cluster</name>
        <dbReference type="ChEBI" id="CHEBI:49883"/>
        <label>2</label>
        <note>4Fe-4S-S-AdoMet</note>
    </ligand>
</feature>
<organism>
    <name type="scientific">Rhodopseudomonas palustris (strain BisA53)</name>
    <dbReference type="NCBI Taxonomy" id="316055"/>
    <lineage>
        <taxon>Bacteria</taxon>
        <taxon>Pseudomonadati</taxon>
        <taxon>Pseudomonadota</taxon>
        <taxon>Alphaproteobacteria</taxon>
        <taxon>Hyphomicrobiales</taxon>
        <taxon>Nitrobacteraceae</taxon>
        <taxon>Rhodopseudomonas</taxon>
    </lineage>
</organism>
<protein>
    <recommendedName>
        <fullName evidence="1">tRNA-2-methylthio-N(6)-dimethylallyladenosine synthase</fullName>
        <ecNumber evidence="1">2.8.4.3</ecNumber>
    </recommendedName>
    <alternativeName>
        <fullName evidence="1">(Dimethylallyl)adenosine tRNA methylthiotransferase MiaB</fullName>
    </alternativeName>
    <alternativeName>
        <fullName evidence="1">tRNA-i(6)A37 methylthiotransferase</fullName>
    </alternativeName>
</protein>
<sequence>MDQPRKLHIKSFGCQMNVYDAQRMVDALAPEGFVETQSADDADLVILNTCHIREKAAEKVYSELGKLRLLKQDAASHGRRFEIAVAGCVAQAEGAEIIRRQPAVDVVVGPQSYHHLPELLEKARRDGRALETEFPIEDKFGVLPPPRPDAIRARGVSAFVTVQEGCDKFCSFCVVPYTRGAEMSRPVAKILDDVKRLIDNGVREITLIGQNVNAYHGEGPDDRPWTLGALLRHLASVPGVARLRYSTSHPLDVDDELIAAHRELPGLMPFVHLPVQSGSDAILAAMNRRHSADDYRRVIDRFRQADPSIAFSSDFIVGFPGETDRDFEATLALVTQIGYAGAYSFKYSPRPGTPAAELQEMVAPAVMDQRLEQLQGLIDSQQAAFNRASIGTTVDVLFERAARHPGQIVGRTAYLQPAHVMAADDIVGQVLPVTIHSLERYSLIGELVKPQPARPPKPLPVTTGA</sequence>
<accession>Q07V68</accession>
<reference key="1">
    <citation type="submission" date="2006-09" db="EMBL/GenBank/DDBJ databases">
        <title>Complete sequence of Rhodopseudomonas palustris BisA53.</title>
        <authorList>
            <consortium name="US DOE Joint Genome Institute"/>
            <person name="Copeland A."/>
            <person name="Lucas S."/>
            <person name="Lapidus A."/>
            <person name="Barry K."/>
            <person name="Detter J.C."/>
            <person name="Glavina del Rio T."/>
            <person name="Hammon N."/>
            <person name="Israni S."/>
            <person name="Dalin E."/>
            <person name="Tice H."/>
            <person name="Pitluck S."/>
            <person name="Chain P."/>
            <person name="Malfatti S."/>
            <person name="Shin M."/>
            <person name="Vergez L."/>
            <person name="Schmutz J."/>
            <person name="Larimer F."/>
            <person name="Land M."/>
            <person name="Hauser L."/>
            <person name="Pelletier D.A."/>
            <person name="Kyrpides N."/>
            <person name="Kim E."/>
            <person name="Harwood C.S."/>
            <person name="Oda Y."/>
            <person name="Richardson P."/>
        </authorList>
    </citation>
    <scope>NUCLEOTIDE SEQUENCE [LARGE SCALE GENOMIC DNA]</scope>
    <source>
        <strain>BisA53</strain>
    </source>
</reference>
<comment type="function">
    <text evidence="1">Catalyzes the methylthiolation of N6-(dimethylallyl)adenosine (i(6)A), leading to the formation of 2-methylthio-N6-(dimethylallyl)adenosine (ms(2)i(6)A) at position 37 in tRNAs that read codons beginning with uridine.</text>
</comment>
<comment type="catalytic activity">
    <reaction evidence="1">
        <text>N(6)-dimethylallyladenosine(37) in tRNA + (sulfur carrier)-SH + AH2 + 2 S-adenosyl-L-methionine = 2-methylsulfanyl-N(6)-dimethylallyladenosine(37) in tRNA + (sulfur carrier)-H + 5'-deoxyadenosine + L-methionine + A + S-adenosyl-L-homocysteine + 2 H(+)</text>
        <dbReference type="Rhea" id="RHEA:37067"/>
        <dbReference type="Rhea" id="RHEA-COMP:10375"/>
        <dbReference type="Rhea" id="RHEA-COMP:10376"/>
        <dbReference type="Rhea" id="RHEA-COMP:14737"/>
        <dbReference type="Rhea" id="RHEA-COMP:14739"/>
        <dbReference type="ChEBI" id="CHEBI:13193"/>
        <dbReference type="ChEBI" id="CHEBI:15378"/>
        <dbReference type="ChEBI" id="CHEBI:17319"/>
        <dbReference type="ChEBI" id="CHEBI:17499"/>
        <dbReference type="ChEBI" id="CHEBI:29917"/>
        <dbReference type="ChEBI" id="CHEBI:57844"/>
        <dbReference type="ChEBI" id="CHEBI:57856"/>
        <dbReference type="ChEBI" id="CHEBI:59789"/>
        <dbReference type="ChEBI" id="CHEBI:64428"/>
        <dbReference type="ChEBI" id="CHEBI:74415"/>
        <dbReference type="ChEBI" id="CHEBI:74417"/>
        <dbReference type="EC" id="2.8.4.3"/>
    </reaction>
</comment>
<comment type="cofactor">
    <cofactor evidence="1">
        <name>[4Fe-4S] cluster</name>
        <dbReference type="ChEBI" id="CHEBI:49883"/>
    </cofactor>
    <text evidence="1">Binds 2 [4Fe-4S] clusters. One cluster is coordinated with 3 cysteines and an exchangeable S-adenosyl-L-methionine.</text>
</comment>
<comment type="subunit">
    <text evidence="1">Monomer.</text>
</comment>
<comment type="subcellular location">
    <subcellularLocation>
        <location evidence="1">Cytoplasm</location>
    </subcellularLocation>
</comment>
<comment type="similarity">
    <text evidence="1">Belongs to the methylthiotransferase family. MiaB subfamily.</text>
</comment>
<keyword id="KW-0004">4Fe-4S</keyword>
<keyword id="KW-0963">Cytoplasm</keyword>
<keyword id="KW-0408">Iron</keyword>
<keyword id="KW-0411">Iron-sulfur</keyword>
<keyword id="KW-0479">Metal-binding</keyword>
<keyword id="KW-0949">S-adenosyl-L-methionine</keyword>
<keyword id="KW-0808">Transferase</keyword>
<keyword id="KW-0819">tRNA processing</keyword>
<name>MIAB_RHOP5</name>